<accession>P00971</accession>
<comment type="function">
    <text evidence="1 2 4 5 7">Involved in countering a host defense mechanism which, following viral infection, activates the host anticodon nuclease and shuts off viral translation. Repairs 5'-PO4 and 3'-OH groups in the cleaved host tRNA (PubMed:16671895, PubMed:17068206, PubMed:2444436). The nick ligation reaction entails three nucleotidyl transfer steps (PubMed:12766156). In the first step, the RNA ligase reacts with ATP in the absence of nucleic acid to form a covalent ligase-AMP intermediate and release pyrophosphate (PubMed:12766156). In step 2, the ligase-AMP binds to the nicked duplex nucleic acid and transfers the adenylate to the 5'-PO4 terminus to form an adenylylated nicked intermediate (PubMed:12766156). In step 3, the RNA ligase directs the attack of the nick 3'-OH on the 5'-phosphoanhydride linkage, resulting in a repaired 3'-5' phosphodiester and release of AMP (By similarity) (PubMed:12766156).</text>
</comment>
<comment type="catalytic activity">
    <reaction evidence="1 2 5 9">
        <text>ATP + (ribonucleotide)n-3'-hydroxyl + 5'-phospho-(ribonucleotide)m = (ribonucleotide)n+m + AMP + diphosphate.</text>
        <dbReference type="EC" id="6.5.1.3"/>
    </reaction>
</comment>
<comment type="cofactor">
    <cofactor evidence="1 3 8">
        <name>Mg(2+)</name>
        <dbReference type="ChEBI" id="CHEBI:18420"/>
    </cofactor>
    <text evidence="1 3 8">Binds 2 magnesium ions that perform the catalytic activity via a two-metal mechanism (PubMed:16263720, PubMed:28223499). One of the catalytic Mg(2+), which is coordinated by 5 water molecules, engages the lysine nucleophile and the ATP alpha phosphate while the Mg(2+) orients the PPi leaving group (PubMed:28223499).</text>
</comment>
<comment type="biophysicochemical properties">
    <phDependence>
        <text evidence="4">Optimum pH is 8.0.</text>
    </phDependence>
</comment>
<comment type="domain">
    <text evidence="6">The N-terminus contains the nucleotidyltransferase domain (PubMed:17585047). The C-terminus probably confers tRNA specificity (PubMed:17585047).</text>
</comment>
<comment type="similarity">
    <text evidence="1">Belongs to the Tequatrovirus RNA ligase 1 family.</text>
</comment>
<comment type="caution">
    <text evidence="3">An interaction between the carbonyl oxygen of Gly-269 and the magnesium ion may occur.</text>
</comment>
<gene>
    <name type="primary">63</name>
</gene>
<reference key="1">
    <citation type="journal article" date="1984" name="EMBO J.">
        <title>Sequence and cloning of bacteriophage T4 gene 63 encoding RNA ligase and tail fibre attachment activities.</title>
        <authorList>
            <person name="Rand K.N."/>
            <person name="Gait M.J."/>
        </authorList>
    </citation>
    <scope>NUCLEOTIDE SEQUENCE [GENOMIC DNA]</scope>
</reference>
<reference key="2">
    <citation type="journal article" date="2003" name="Microbiol. Mol. Biol. Rev.">
        <title>Bacteriophage T4 genome.</title>
        <authorList>
            <person name="Miller E.S."/>
            <person name="Kutter E."/>
            <person name="Mosig G."/>
            <person name="Arisaka F."/>
            <person name="Kunisawa T."/>
            <person name="Ruger W."/>
        </authorList>
    </citation>
    <scope>NUCLEOTIDE SEQUENCE [LARGE SCALE GENOMIC DNA]</scope>
</reference>
<reference key="3">
    <citation type="journal article" date="1986" name="EMBO J.">
        <title>The bacteriophage T4 gene for the small subunit of ribonucleotide reductase contains an intron.</title>
        <authorList>
            <person name="Sjoeberg B.-M."/>
            <person name="Hahne S."/>
            <person name="Mathews C.Z."/>
            <person name="Mathews C.K."/>
            <person name="Rand K.N."/>
            <person name="Gait M.J."/>
        </authorList>
    </citation>
    <scope>NUCLEOTIDE SEQUENCE [GENOMIC DNA] OF 1-89</scope>
</reference>
<reference key="4">
    <citation type="journal article" date="1985" name="Eur. J. Biochem.">
        <title>Location of the adenylylation site in T4 RNA ligase.</title>
        <authorList>
            <person name="Thoegersen H.C."/>
            <person name="Morris H.R."/>
            <person name="Rand K.N."/>
            <person name="Gait M.J."/>
        </authorList>
    </citation>
    <scope>ACTIVE SITE</scope>
</reference>
<reference key="5">
    <citation type="journal article" date="1987" name="Biochemistry">
        <title>Effect of single amino acid changes in the region of the adenylylation site of T4 RNA ligase.</title>
        <authorList>
            <person name="Heaphy S."/>
            <person name="Singh M."/>
            <person name="Gait M.J."/>
        </authorList>
    </citation>
    <scope>MUTAGENESIS OF LYS-99; GLU-100 AND ASP-101</scope>
    <scope>CATALYTIC ACTIVITY</scope>
</reference>
<reference key="6">
    <citation type="journal article" date="1987" name="EMBO J.">
        <title>Bacteriophage T4 anticodon nuclease, polynucleotide kinase and RNA ligase reprocess the host lysine tRNA.</title>
        <authorList>
            <person name="Amitsur M."/>
            <person name="Levitz R."/>
            <person name="Kaufmann G."/>
        </authorList>
    </citation>
    <scope>FUNCTION</scope>
</reference>
<reference key="7">
    <citation type="journal article" date="2003" name="J. Biol. Chem.">
        <title>Mutational analysis of bacteriophage T4 RNA ligase 1. Different functional groups are required for the nucleotidyl transfer and phosphodiester bond formation steps of the ligation reaction.</title>
        <authorList>
            <person name="Wang L.K."/>
            <person name="Ho C.K."/>
            <person name="Pei Y."/>
            <person name="Shuman S."/>
        </authorList>
    </citation>
    <scope>MUTAGENESIS OF ARG-54; LYS-75; PHE-77; LYS-99; GLY-102; LYS-119; GLU-227; GLY-228; LYS-240 AND LYS-242</scope>
    <scope>CATALYTIC ACTIVITY</scope>
</reference>
<reference key="8">
    <citation type="journal article" date="2006" name="RNA">
        <title>Structure-guided mutational analysis of T4 RNA ligase 1.</title>
        <authorList>
            <person name="Wang L.K."/>
            <person name="Schwer B."/>
            <person name="Shuman S."/>
        </authorList>
    </citation>
    <scope>FUNCTION</scope>
    <scope>MUTAGENESIS OF TYR-37; TRP-45; GLU-159; ASN-165; LEU-179; VAL-230; TYR-246; ASP-272 AND ASP-273</scope>
    <scope>CATALYTIC ACTIVITY</scope>
</reference>
<reference key="9">
    <citation type="journal article" date="2006" name="Biochem. J.">
        <title>Direct comparison of nick-joining activity of the nucleic acid ligases from bacteriophage T4.</title>
        <authorList>
            <person name="Bullard D.R."/>
            <person name="Bowater R.P."/>
        </authorList>
    </citation>
    <scope>BIOPHYSICOCHEMICAL PROPERTIES</scope>
    <scope>FUNCTION</scope>
</reference>
<reference key="10">
    <citation type="journal article" date="2007" name="RNA">
        <title>The C-terminal domain of T4 RNA ligase 1 confers specificity for tRNA repair.</title>
        <authorList>
            <person name="Wang L.K."/>
            <person name="Nandakumar J."/>
            <person name="Schwer B."/>
            <person name="Shuman S."/>
        </authorList>
    </citation>
    <scope>DOMAIN</scope>
</reference>
<reference evidence="11" key="11">
    <citation type="journal article" date="2006" name="J. Biol. Chem.">
        <title>Molecular architecture and ligand recognition determinants for T4 RNA ligase.</title>
        <authorList>
            <person name="El Omari K."/>
            <person name="Ren J."/>
            <person name="Bird L.E."/>
            <person name="Bona M.K."/>
            <person name="Klarmann G."/>
            <person name="LeGrice S.F.J."/>
            <person name="Stammers D.K."/>
        </authorList>
    </citation>
    <scope>X-RAY CRYSTALLOGRAPHY (2.2 ANGSTROMS)</scope>
    <scope>COFACTOR</scope>
</reference>
<reference evidence="12" key="12">
    <citation type="journal article" date="2017" name="Proc. Natl. Acad. Sci. U.S.A.">
        <title>Two-metal versus one-metal mechanisms of lysine adenylylation by ATP-dependent and NAD+-dependent polynucleotide ligases.</title>
        <authorList>
            <person name="Unciuleac M.C."/>
            <person name="Goldgur Y."/>
            <person name="Shuman S."/>
        </authorList>
    </citation>
    <scope>X-RAY CRYSTALLOGRAPHY (2.19 ANGSTROMS) IN COMPLEX WITH ATP</scope>
    <scope>COFACTOR</scope>
</reference>
<evidence type="ECO:0000255" key="1">
    <source>
        <dbReference type="HAMAP-Rule" id="MF_04149"/>
    </source>
</evidence>
<evidence type="ECO:0000269" key="2">
    <source>
    </source>
</evidence>
<evidence type="ECO:0000269" key="3">
    <source>
    </source>
</evidence>
<evidence type="ECO:0000269" key="4">
    <source>
    </source>
</evidence>
<evidence type="ECO:0000269" key="5">
    <source>
    </source>
</evidence>
<evidence type="ECO:0000269" key="6">
    <source>
    </source>
</evidence>
<evidence type="ECO:0000269" key="7">
    <source>
    </source>
</evidence>
<evidence type="ECO:0000269" key="8">
    <source>
    </source>
</evidence>
<evidence type="ECO:0000269" key="9">
    <source>
    </source>
</evidence>
<evidence type="ECO:0000269" key="10">
    <source>
    </source>
</evidence>
<evidence type="ECO:0007744" key="11">
    <source>
        <dbReference type="PDB" id="2C5U"/>
    </source>
</evidence>
<evidence type="ECO:0007744" key="12">
    <source>
        <dbReference type="PDB" id="5TT6"/>
    </source>
</evidence>
<evidence type="ECO:0007829" key="13">
    <source>
        <dbReference type="PDB" id="2C5U"/>
    </source>
</evidence>
<evidence type="ECO:0007829" key="14">
    <source>
        <dbReference type="PDB" id="5TT6"/>
    </source>
</evidence>
<keyword id="KW-0002">3D-structure</keyword>
<keyword id="KW-0067">ATP-binding</keyword>
<keyword id="KW-1259">Evasion of bacteria-mediated translation shutoff by virus</keyword>
<keyword id="KW-0945">Host-virus interaction</keyword>
<keyword id="KW-0436">Ligase</keyword>
<keyword id="KW-0460">Magnesium</keyword>
<keyword id="KW-0479">Metal-binding</keyword>
<keyword id="KW-0547">Nucleotide-binding</keyword>
<keyword id="KW-1185">Reference proteome</keyword>
<keyword id="KW-0692">RNA repair</keyword>
<protein>
    <recommendedName>
        <fullName evidence="1">RNA ligase 1</fullName>
        <ecNumber evidence="1 2 5 9">6.5.1.3</ecNumber>
    </recommendedName>
    <alternativeName>
        <fullName>Gene product 63</fullName>
        <shortName>gp63</shortName>
    </alternativeName>
    <alternativeName>
        <fullName evidence="1">Rnl1</fullName>
    </alternativeName>
</protein>
<feature type="chain" id="PRO_0000164976" description="RNA ligase 1">
    <location>
        <begin position="1"/>
        <end position="374"/>
    </location>
</feature>
<feature type="active site" description="N6-AMP-lysine intermediate" evidence="1 10">
    <location>
        <position position="99"/>
    </location>
</feature>
<feature type="binding site" evidence="1 8">
    <location>
        <position position="37"/>
    </location>
    <ligand>
        <name>ATP</name>
        <dbReference type="ChEBI" id="CHEBI:30616"/>
    </ligand>
</feature>
<feature type="binding site" evidence="1 8">
    <location>
        <position position="54"/>
    </location>
    <ligand>
        <name>ATP</name>
        <dbReference type="ChEBI" id="CHEBI:30616"/>
    </ligand>
</feature>
<feature type="binding site" evidence="1 8">
    <location>
        <position position="75"/>
    </location>
    <ligand>
        <name>ATP</name>
        <dbReference type="ChEBI" id="CHEBI:30616"/>
    </ligand>
</feature>
<feature type="binding site" evidence="1 8">
    <location>
        <position position="159"/>
    </location>
    <ligand>
        <name>ATP</name>
        <dbReference type="ChEBI" id="CHEBI:30616"/>
    </ligand>
</feature>
<feature type="binding site" evidence="1 8">
    <location>
        <position position="240"/>
    </location>
    <ligand>
        <name>ATP</name>
        <dbReference type="ChEBI" id="CHEBI:30616"/>
    </ligand>
</feature>
<feature type="binding site" evidence="1 8">
    <location>
        <position position="242"/>
    </location>
    <ligand>
        <name>ATP</name>
        <dbReference type="ChEBI" id="CHEBI:30616"/>
    </ligand>
</feature>
<feature type="binding site" evidence="1 3 8">
    <location>
        <position position="272"/>
    </location>
    <ligand>
        <name>Mg(2+)</name>
        <dbReference type="ChEBI" id="CHEBI:18420"/>
        <note>catalytic</note>
    </ligand>
</feature>
<feature type="site" description="Essential for RNA ligase activity" evidence="1 5">
    <location>
        <position position="159"/>
    </location>
</feature>
<feature type="site" description="Essential for RNA ligase activity" evidence="1 5">
    <location>
        <position position="246"/>
    </location>
</feature>
<feature type="mutagenesis site" description="No effect on the ligation of 5'-PO4 and 3'-OH termini of the RNA strand and on tRNA repair." evidence="5">
    <original>Y</original>
    <variation>A</variation>
    <location>
        <position position="37"/>
    </location>
</feature>
<feature type="mutagenesis site" description="Partial loss of the ligation of 5'-PO4 and 3'-OH termini of the RNA strand and on tRNA repair." evidence="5">
    <original>W</original>
    <variation>A</variation>
    <location>
        <position position="45"/>
    </location>
</feature>
<feature type="mutagenesis site" description="65% loss of adenylyltransferase activity. 70% loss of ligase activity." evidence="2">
    <original>R</original>
    <variation>A</variation>
    <location>
        <position position="54"/>
    </location>
</feature>
<feature type="mutagenesis site" description="95% loss of adenylyltransferase activity. Impaired ligase activity." evidence="2">
    <original>K</original>
    <variation>A</variation>
    <location>
        <position position="75"/>
    </location>
</feature>
<feature type="mutagenesis site" description="90% loss of adenylyltransferase activity. Impaired ligase activity." evidence="2">
    <original>F</original>
    <variation>A</variation>
    <location>
        <position position="77"/>
    </location>
</feature>
<feature type="mutagenesis site" description="Complete loss of adenylyltransferase activity and ligase activity." evidence="2">
    <original>K</original>
    <variation>A</variation>
    <location>
        <position position="99"/>
    </location>
</feature>
<feature type="mutagenesis site" description="Complete loss of ligase activity." evidence="9">
    <original>K</original>
    <variation>N</variation>
    <location>
        <position position="99"/>
    </location>
</feature>
<feature type="mutagenesis site" description="About 50% loss of ligase activity." evidence="9">
    <original>K</original>
    <variation>R</variation>
    <location>
        <position position="99"/>
    </location>
</feature>
<feature type="mutagenesis site" description="No effect on ligase activity." evidence="9">
    <original>E</original>
    <variation>Q</variation>
    <location>
        <position position="100"/>
    </location>
</feature>
<feature type="mutagenesis site" description="About 50% loss of ligase activity." evidence="9">
    <original>E</original>
    <variation>T</variation>
    <location>
        <position position="100"/>
    </location>
</feature>
<feature type="mutagenesis site" description="Complete loss of ligase activity." evidence="9">
    <original>D</original>
    <variation>N</variation>
    <variation>S</variation>
    <variation>E</variation>
    <location>
        <position position="101"/>
    </location>
</feature>
<feature type="mutagenesis site" description="Complete loss of adenylyltransferase activity and ligase activity." evidence="2">
    <original>G</original>
    <variation>A</variation>
    <location>
        <position position="102"/>
    </location>
</feature>
<feature type="mutagenesis site" description="Increased adenylyltransferase activity. No effect on ligase activity." evidence="2">
    <original>K</original>
    <variation>A</variation>
    <location>
        <position position="119"/>
    </location>
</feature>
<feature type="mutagenesis site" description="Complete loss of ligation of 5'-PO4 and 3'-OH termini of the RNA strand and complete loss of tRNA repair." evidence="5">
    <original>E</original>
    <variation>A</variation>
    <location>
        <position position="159"/>
    </location>
</feature>
<feature type="mutagenesis site" description="Partial loss of the ligation of 5'-PO4 and 3'-OH termini of the RNA strand; no effect on tRNA repair." evidence="5">
    <original>N</original>
    <variation>A</variation>
    <location>
        <position position="165"/>
    </location>
</feature>
<feature type="mutagenesis site" description="Partial loss of the ligation of 5'-PO4 and 3'-OH termini of the RNA strand; no effect on tRNA repair." evidence="5">
    <original>L</original>
    <variation>A</variation>
    <location>
        <position position="179"/>
    </location>
</feature>
<feature type="mutagenesis site" description="Complete loss of ligation." evidence="2">
    <original>R</original>
    <variation>A</variation>
    <location>
        <position position="182"/>
    </location>
</feature>
<feature type="mutagenesis site" description="Complete loss of adenylyltransferase activity and ligase activity." evidence="2">
    <original>E</original>
    <variation>A</variation>
    <location>
        <position position="227"/>
    </location>
</feature>
<feature type="mutagenesis site" description="Complete loss of adenylyltransferase activity and ligase activity." evidence="2">
    <original>G</original>
    <variation>A</variation>
    <location>
        <position position="228"/>
    </location>
</feature>
<feature type="mutagenesis site" description="Partial loss of the ligation of 5'-PO4 and 3'-OH termini of the RNA strand; no effect on tRNA repair." evidence="5">
    <original>V</original>
    <variation>A</variation>
    <location>
        <position position="230"/>
    </location>
</feature>
<feature type="mutagenesis site" description="Complete loss of adenylyltransferase activity and ligase activity." evidence="2">
    <original>K</original>
    <variation>A</variation>
    <location>
        <position position="240"/>
    </location>
</feature>
<feature type="mutagenesis site" description="Complete loss of adenylyltransferase activity and ligase activity." evidence="2">
    <original>K</original>
    <variation>A</variation>
    <location>
        <position position="242"/>
    </location>
</feature>
<feature type="mutagenesis site" description="Complete loss of ligation of 5'-PO4 and 3'-OH termini of the RNA strand and complete loss of tRNA repair; no effect on adenylyltransferase activity." evidence="5">
    <original>Y</original>
    <variation>A</variation>
    <location>
        <position position="246"/>
    </location>
</feature>
<feature type="mutagenesis site" description="No effect on the ligation of 5'-PO4 and 3'-OH termini of the RNA strand and no effect on tRNA repair." evidence="5">
    <original>D</original>
    <variation>A</variation>
    <location>
        <position position="272"/>
    </location>
</feature>
<feature type="mutagenesis site" description="No effect on the ligation of 5'-PO4 and 3'-OH termini of the RNA strand and no effect on tRNA repair." evidence="5">
    <original>D</original>
    <variation>A</variation>
    <location>
        <position position="273"/>
    </location>
</feature>
<feature type="helix" evidence="14">
    <location>
        <begin position="1"/>
        <end position="11"/>
    </location>
</feature>
<feature type="strand" evidence="14">
    <location>
        <begin position="18"/>
        <end position="25"/>
    </location>
</feature>
<feature type="strand" evidence="14">
    <location>
        <begin position="31"/>
        <end position="38"/>
    </location>
</feature>
<feature type="helix" evidence="14">
    <location>
        <begin position="44"/>
        <end position="46"/>
    </location>
</feature>
<feature type="helix" evidence="14">
    <location>
        <begin position="50"/>
        <end position="52"/>
    </location>
</feature>
<feature type="turn" evidence="13">
    <location>
        <begin position="53"/>
        <end position="55"/>
    </location>
</feature>
<feature type="strand" evidence="14">
    <location>
        <begin position="57"/>
        <end position="61"/>
    </location>
</feature>
<feature type="strand" evidence="14">
    <location>
        <begin position="64"/>
        <end position="70"/>
    </location>
</feature>
<feature type="helix" evidence="14">
    <location>
        <begin position="83"/>
        <end position="85"/>
    </location>
</feature>
<feature type="helix" evidence="14">
    <location>
        <begin position="90"/>
        <end position="92"/>
    </location>
</feature>
<feature type="strand" evidence="14">
    <location>
        <begin position="93"/>
        <end position="98"/>
    </location>
</feature>
<feature type="strand" evidence="14">
    <location>
        <begin position="102"/>
        <end position="110"/>
    </location>
</feature>
<feature type="strand" evidence="14">
    <location>
        <begin position="113"/>
        <end position="120"/>
    </location>
</feature>
<feature type="strand" evidence="14">
    <location>
        <begin position="122"/>
        <end position="124"/>
    </location>
</feature>
<feature type="helix" evidence="14">
    <location>
        <begin position="125"/>
        <end position="135"/>
    </location>
</feature>
<feature type="helix" evidence="14">
    <location>
        <begin position="137"/>
        <end position="139"/>
    </location>
</feature>
<feature type="helix" evidence="14">
    <location>
        <begin position="140"/>
        <end position="151"/>
    </location>
</feature>
<feature type="strand" evidence="14">
    <location>
        <begin position="154"/>
        <end position="161"/>
    </location>
</feature>
<feature type="helix" evidence="14">
    <location>
        <begin position="163"/>
        <end position="165"/>
    </location>
</feature>
<feature type="strand" evidence="14">
    <location>
        <begin position="167"/>
        <end position="169"/>
    </location>
</feature>
<feature type="strand" evidence="14">
    <location>
        <begin position="175"/>
        <end position="183"/>
    </location>
</feature>
<feature type="turn" evidence="14">
    <location>
        <begin position="184"/>
        <end position="186"/>
    </location>
</feature>
<feature type="helix" evidence="14">
    <location>
        <begin position="192"/>
        <end position="197"/>
    </location>
</feature>
<feature type="turn" evidence="14">
    <location>
        <begin position="199"/>
        <end position="201"/>
    </location>
</feature>
<feature type="helix" evidence="14">
    <location>
        <begin position="202"/>
        <end position="204"/>
    </location>
</feature>
<feature type="strand" evidence="13">
    <location>
        <begin position="208"/>
        <end position="210"/>
    </location>
</feature>
<feature type="helix" evidence="14">
    <location>
        <begin position="216"/>
        <end position="222"/>
    </location>
</feature>
<feature type="strand" evidence="14">
    <location>
        <begin position="228"/>
        <end position="233"/>
    </location>
</feature>
<feature type="strand" evidence="14">
    <location>
        <begin position="238"/>
        <end position="242"/>
    </location>
</feature>
<feature type="helix" evidence="14">
    <location>
        <begin position="244"/>
        <end position="250"/>
    </location>
</feature>
<feature type="turn" evidence="14">
    <location>
        <begin position="253"/>
        <end position="257"/>
    </location>
</feature>
<feature type="helix" evidence="14">
    <location>
        <begin position="259"/>
        <end position="267"/>
    </location>
</feature>
<feature type="helix" evidence="14">
    <location>
        <begin position="271"/>
        <end position="277"/>
    </location>
</feature>
<feature type="turn" evidence="14">
    <location>
        <begin position="278"/>
        <end position="280"/>
    </location>
</feature>
<feature type="helix" evidence="14">
    <location>
        <begin position="282"/>
        <end position="313"/>
    </location>
</feature>
<feature type="strand" evidence="13">
    <location>
        <begin position="314"/>
        <end position="316"/>
    </location>
</feature>
<feature type="helix" evidence="14">
    <location>
        <begin position="318"/>
        <end position="331"/>
    </location>
</feature>
<feature type="helix" evidence="14">
    <location>
        <begin position="337"/>
        <end position="343"/>
    </location>
</feature>
<feature type="turn" evidence="14">
    <location>
        <begin position="344"/>
        <end position="346"/>
    </location>
</feature>
<feature type="helix" evidence="14">
    <location>
        <begin position="351"/>
        <end position="364"/>
    </location>
</feature>
<feature type="helix" evidence="14">
    <location>
        <begin position="366"/>
        <end position="369"/>
    </location>
</feature>
<organism>
    <name type="scientific">Enterobacteria phage T4</name>
    <name type="common">Bacteriophage T4</name>
    <dbReference type="NCBI Taxonomy" id="10665"/>
    <lineage>
        <taxon>Viruses</taxon>
        <taxon>Duplodnaviria</taxon>
        <taxon>Heunggongvirae</taxon>
        <taxon>Uroviricota</taxon>
        <taxon>Caudoviricetes</taxon>
        <taxon>Straboviridae</taxon>
        <taxon>Tevenvirinae</taxon>
        <taxon>Tequatrovirus</taxon>
    </lineage>
</organism>
<sequence length="374" mass="43509">MQELFNNLMELCKDSQRKFFYSDDVSASGRTYRIFSYNYASYSDWLLPDALECRGIMFEMDGEKPVRIASRPMEKFFNLNENPFTMNIDLNDVDYILTKEDGSLVSTYLDGDEILFKSKGSIKSEQALMANGILMNINHHRLRDRLKELAEDGFTANFEFVAPTNRIVLAYQEMKIILLNVRENETGEYISYDDIYKDATLRPYLVERYEIDSPKWIEEAKNAENIEGYVAVMKDGSHFKIKSDWYVSLHSTKSSLDNPEKLFKTIIDGASDDLKAMYADDEYSYRKIEAFETTYLKYLDRALFLVLDCHNKHCGKDRKTYAMEAQGVAKGAGMDHLFGIIMSLYQGYDSQEKVMCEIEQNFLKNYKKFIPEGY</sequence>
<proteinExistence type="evidence at protein level"/>
<dbReference type="EC" id="6.5.1.3" evidence="1 2 5 9"/>
<dbReference type="EMBL" id="X00365">
    <property type="protein sequence ID" value="CAA25107.1"/>
    <property type="molecule type" value="Genomic_DNA"/>
</dbReference>
<dbReference type="EMBL" id="X04140">
    <property type="protein sequence ID" value="CAA27760.1"/>
    <property type="molecule type" value="Genomic_DNA"/>
</dbReference>
<dbReference type="EMBL" id="AF158101">
    <property type="protein sequence ID" value="AAD42514.1"/>
    <property type="molecule type" value="Genomic_DNA"/>
</dbReference>
<dbReference type="EMBL" id="M10160">
    <property type="status" value="NOT_ANNOTATED_CDS"/>
    <property type="molecule type" value="Genomic_DNA"/>
</dbReference>
<dbReference type="PIR" id="A01202">
    <property type="entry name" value="LQBPR4"/>
</dbReference>
<dbReference type="RefSeq" id="NP_049839.1">
    <property type="nucleotide sequence ID" value="NC_000866.4"/>
</dbReference>
<dbReference type="PDB" id="2C5U">
    <property type="method" value="X-ray"/>
    <property type="resolution" value="2.21 A"/>
    <property type="chains" value="A/B=1-374"/>
</dbReference>
<dbReference type="PDB" id="5TT6">
    <property type="method" value="X-ray"/>
    <property type="resolution" value="2.19 A"/>
    <property type="chains" value="A=1-374"/>
</dbReference>
<dbReference type="PDB" id="9DO4">
    <property type="method" value="X-ray"/>
    <property type="resolution" value="2.60 A"/>
    <property type="chains" value="B=1-374"/>
</dbReference>
<dbReference type="PDBsum" id="2C5U"/>
<dbReference type="PDBsum" id="5TT6"/>
<dbReference type="PDBsum" id="9DO4"/>
<dbReference type="SMR" id="P00971"/>
<dbReference type="GeneID" id="1258717"/>
<dbReference type="KEGG" id="vg:1258717"/>
<dbReference type="OrthoDB" id="8076at10239"/>
<dbReference type="EvolutionaryTrace" id="P00971"/>
<dbReference type="Proteomes" id="UP000009087">
    <property type="component" value="Segment"/>
</dbReference>
<dbReference type="GO" id="GO:0005524">
    <property type="term" value="F:ATP binding"/>
    <property type="evidence" value="ECO:0007669"/>
    <property type="project" value="UniProtKB-UniRule"/>
</dbReference>
<dbReference type="GO" id="GO:0046872">
    <property type="term" value="F:metal ion binding"/>
    <property type="evidence" value="ECO:0007669"/>
    <property type="project" value="UniProtKB-UniRule"/>
</dbReference>
<dbReference type="GO" id="GO:0003972">
    <property type="term" value="F:RNA ligase (ATP) activity"/>
    <property type="evidence" value="ECO:0000315"/>
    <property type="project" value="CACAO"/>
</dbReference>
<dbReference type="GO" id="GO:0042245">
    <property type="term" value="P:RNA repair"/>
    <property type="evidence" value="ECO:0007669"/>
    <property type="project" value="UniProtKB-UniRule"/>
</dbReference>
<dbReference type="GO" id="GO:0098004">
    <property type="term" value="P:virus tail fiber assembly"/>
    <property type="evidence" value="ECO:0000315"/>
    <property type="project" value="CACAO"/>
</dbReference>
<dbReference type="FunFam" id="1.10.3550.20:FF:000001">
    <property type="entry name" value="T4 RNA ligase 1"/>
    <property type="match status" value="1"/>
</dbReference>
<dbReference type="Gene3D" id="1.10.3550.20">
    <property type="match status" value="1"/>
</dbReference>
<dbReference type="HAMAP" id="MF_04149">
    <property type="entry name" value="RNALIG_T4"/>
    <property type="match status" value="1"/>
</dbReference>
<dbReference type="InterPro" id="IPR012648">
    <property type="entry name" value="Rnl1"/>
</dbReference>
<dbReference type="InterPro" id="IPR019039">
    <property type="entry name" value="T4-Rnl1-like_N"/>
</dbReference>
<dbReference type="InterPro" id="IPR049042">
    <property type="entry name" value="T4_Rnl1_C"/>
</dbReference>
<dbReference type="NCBIfam" id="TIGR02308">
    <property type="entry name" value="RNA_lig_T4_1"/>
    <property type="match status" value="1"/>
</dbReference>
<dbReference type="Pfam" id="PF09511">
    <property type="entry name" value="RNA_lig_T4_1"/>
    <property type="match status" value="1"/>
</dbReference>
<dbReference type="Pfam" id="PF20819">
    <property type="entry name" value="T4_Rnl1_C"/>
    <property type="match status" value="1"/>
</dbReference>
<name>RLIG_BPT4</name>
<organismHost>
    <name type="scientific">Escherichia coli</name>
    <dbReference type="NCBI Taxonomy" id="562"/>
</organismHost>